<comment type="function">
    <text evidence="3">Involved in the biosynthesis of ent-kaurene diterpenoids natural products such as oridonin, miltiradiene, eriocalyxin B and nezukol, known to exhibit antitumor, anti-inflammatory and antibacterial activities, and in the production of gibberellins phytohormones (PubMed:30496917). Catalyzes the conversion of ent-copalyl diphosphate (ent-CPP) to ent-kaurene (PubMed:30496917).</text>
</comment>
<comment type="catalytic activity">
    <reaction evidence="3">
        <text>ent-copalyl diphosphate = ent-kaur-16-ene + diphosphate</text>
        <dbReference type="Rhea" id="RHEA:22220"/>
        <dbReference type="ChEBI" id="CHEBI:15415"/>
        <dbReference type="ChEBI" id="CHEBI:33019"/>
        <dbReference type="ChEBI" id="CHEBI:58553"/>
        <dbReference type="EC" id="4.2.3.19"/>
    </reaction>
    <physiologicalReaction direction="left-to-right" evidence="3">
        <dbReference type="Rhea" id="RHEA:22221"/>
    </physiologicalReaction>
</comment>
<comment type="cofactor">
    <cofactor evidence="1">
        <name>Mg(2+)</name>
        <dbReference type="ChEBI" id="CHEBI:18420"/>
    </cofactor>
    <text evidence="1">Binds 3 Mg(2+) ions per subunit.</text>
</comment>
<comment type="pathway">
    <text evidence="3">Secondary metabolite biosynthesis; terpenoid biosynthesis.</text>
</comment>
<comment type="pathway">
    <text evidence="6">Plant hormone biosynthesis; gibberellin biosynthesis.</text>
</comment>
<comment type="subcellular location">
    <subcellularLocation>
        <location evidence="2">Plastid</location>
        <location evidence="2">Chloroplast</location>
    </subcellularLocation>
</comment>
<comment type="tissue specificity">
    <text evidence="3">Accumulates in leaves, and, at low levels, in germinating seeds.</text>
</comment>
<comment type="developmental stage">
    <text evidence="3">Moslty expressed in leaves where ent-kaurane diterpenoids accumulates but weakly expressed in germinating seeds in which gibberellins are produced.</text>
</comment>
<comment type="domain">
    <text evidence="5">The Asp-Asp-Xaa-Xaa-Asp/Glu (DDXXD/E) motif is important for the catalytic activity, presumably through binding to Mg(2+).</text>
</comment>
<comment type="similarity">
    <text evidence="5">Belongs to the terpene synthase family.</text>
</comment>
<organism>
    <name type="scientific">Isodon eriocalyx</name>
    <name type="common">Plectranthus eriocalyx</name>
    <dbReference type="NCBI Taxonomy" id="662907"/>
    <lineage>
        <taxon>Eukaryota</taxon>
        <taxon>Viridiplantae</taxon>
        <taxon>Streptophyta</taxon>
        <taxon>Embryophyta</taxon>
        <taxon>Tracheophyta</taxon>
        <taxon>Spermatophyta</taxon>
        <taxon>Magnoliopsida</taxon>
        <taxon>eudicotyledons</taxon>
        <taxon>Gunneridae</taxon>
        <taxon>Pentapetalae</taxon>
        <taxon>asterids</taxon>
        <taxon>lamiids</taxon>
        <taxon>Lamiales</taxon>
        <taxon>Lamiaceae</taxon>
        <taxon>Nepetoideae</taxon>
        <taxon>Ocimeae</taxon>
        <taxon>Isodoninae</taxon>
        <taxon>Isodon</taxon>
    </lineage>
</organism>
<keyword id="KW-0150">Chloroplast</keyword>
<keyword id="KW-0456">Lyase</keyword>
<keyword id="KW-0460">Magnesium</keyword>
<keyword id="KW-0479">Metal-binding</keyword>
<keyword id="KW-0934">Plastid</keyword>
<keyword id="KW-0809">Transit peptide</keyword>
<feature type="transit peptide" description="Chloroplast" evidence="2">
    <location>
        <begin position="1"/>
        <end position="28"/>
    </location>
</feature>
<feature type="chain" id="PRO_0000452388" description="Ent-kaurene synthase 1, chloroplastic">
    <location>
        <begin position="29"/>
        <end position="794"/>
    </location>
</feature>
<feature type="short sequence motif" description="DDXXD motif" evidence="5">
    <location>
        <begin position="543"/>
        <end position="547"/>
    </location>
</feature>
<feature type="binding site" evidence="1">
    <location>
        <position position="543"/>
    </location>
    <ligand>
        <name>Mg(2+)</name>
        <dbReference type="ChEBI" id="CHEBI:18420"/>
        <label>1</label>
    </ligand>
</feature>
<feature type="binding site" evidence="1">
    <location>
        <position position="543"/>
    </location>
    <ligand>
        <name>Mg(2+)</name>
        <dbReference type="ChEBI" id="CHEBI:18420"/>
        <label>2</label>
    </ligand>
</feature>
<feature type="binding site" evidence="1">
    <location>
        <position position="547"/>
    </location>
    <ligand>
        <name>Mg(2+)</name>
        <dbReference type="ChEBI" id="CHEBI:18420"/>
        <label>1</label>
    </ligand>
</feature>
<feature type="binding site" evidence="1">
    <location>
        <position position="547"/>
    </location>
    <ligand>
        <name>Mg(2+)</name>
        <dbReference type="ChEBI" id="CHEBI:18420"/>
        <label>2</label>
    </ligand>
</feature>
<feature type="binding site" evidence="1">
    <location>
        <position position="687"/>
    </location>
    <ligand>
        <name>Mg(2+)</name>
        <dbReference type="ChEBI" id="CHEBI:18420"/>
        <label>3</label>
    </ligand>
</feature>
<feature type="binding site" evidence="1">
    <location>
        <position position="695"/>
    </location>
    <ligand>
        <name>Mg(2+)</name>
        <dbReference type="ChEBI" id="CHEBI:18420"/>
        <label>3</label>
    </ligand>
</feature>
<accession>A0A3G1QTS7</accession>
<name>KS1_ISOER</name>
<evidence type="ECO:0000250" key="1">
    <source>
        <dbReference type="UniProtKB" id="Q40577"/>
    </source>
</evidence>
<evidence type="ECO:0000255" key="2"/>
<evidence type="ECO:0000269" key="3">
    <source>
    </source>
</evidence>
<evidence type="ECO:0000303" key="4">
    <source>
    </source>
</evidence>
<evidence type="ECO:0000305" key="5"/>
<evidence type="ECO:0000305" key="6">
    <source>
    </source>
</evidence>
<dbReference type="EC" id="4.2.3.19" evidence="3"/>
<dbReference type="EMBL" id="KY937953">
    <property type="protein sequence ID" value="AWN06647.1"/>
    <property type="molecule type" value="mRNA"/>
</dbReference>
<dbReference type="SMR" id="A0A3G1QTS7"/>
<dbReference type="UniPathway" id="UPA00213"/>
<dbReference type="UniPathway" id="UPA00390"/>
<dbReference type="GO" id="GO:0009507">
    <property type="term" value="C:chloroplast"/>
    <property type="evidence" value="ECO:0007669"/>
    <property type="project" value="UniProtKB-SubCell"/>
</dbReference>
<dbReference type="GO" id="GO:0009899">
    <property type="term" value="F:ent-kaurene synthase activity"/>
    <property type="evidence" value="ECO:0000314"/>
    <property type="project" value="UniProtKB"/>
</dbReference>
<dbReference type="GO" id="GO:0000287">
    <property type="term" value="F:magnesium ion binding"/>
    <property type="evidence" value="ECO:0007669"/>
    <property type="project" value="InterPro"/>
</dbReference>
<dbReference type="GO" id="GO:0033332">
    <property type="term" value="P:ent-kaurene biosynthetic process"/>
    <property type="evidence" value="ECO:0000314"/>
    <property type="project" value="UniProtKB"/>
</dbReference>
<dbReference type="GO" id="GO:0009686">
    <property type="term" value="P:gibberellin biosynthetic process"/>
    <property type="evidence" value="ECO:0007669"/>
    <property type="project" value="UniProtKB-UniPathway"/>
</dbReference>
<dbReference type="GO" id="GO:0016114">
    <property type="term" value="P:terpenoid biosynthetic process"/>
    <property type="evidence" value="ECO:0000314"/>
    <property type="project" value="UniProtKB"/>
</dbReference>
<dbReference type="CDD" id="cd00684">
    <property type="entry name" value="Terpene_cyclase_plant_C1"/>
    <property type="match status" value="1"/>
</dbReference>
<dbReference type="FunFam" id="1.50.10.160:FF:000002">
    <property type="entry name" value="cis-abienol synthase, chloroplastic"/>
    <property type="match status" value="1"/>
</dbReference>
<dbReference type="FunFam" id="1.50.10.130:FF:000002">
    <property type="entry name" value="Ent-copalyl diphosphate synthase, chloroplastic"/>
    <property type="match status" value="1"/>
</dbReference>
<dbReference type="FunFam" id="1.10.600.10:FF:000005">
    <property type="entry name" value="Ent-kaur-16-ene synthase, chloroplastic"/>
    <property type="match status" value="1"/>
</dbReference>
<dbReference type="Gene3D" id="1.50.10.160">
    <property type="match status" value="1"/>
</dbReference>
<dbReference type="Gene3D" id="1.10.600.10">
    <property type="entry name" value="Farnesyl Diphosphate Synthase"/>
    <property type="match status" value="1"/>
</dbReference>
<dbReference type="Gene3D" id="1.50.10.130">
    <property type="entry name" value="Terpene synthase, N-terminal domain"/>
    <property type="match status" value="1"/>
</dbReference>
<dbReference type="InterPro" id="IPR008949">
    <property type="entry name" value="Isoprenoid_synthase_dom_sf"/>
</dbReference>
<dbReference type="InterPro" id="IPR044814">
    <property type="entry name" value="Terpene_cyclase_plant_C1"/>
</dbReference>
<dbReference type="InterPro" id="IPR001906">
    <property type="entry name" value="Terpene_synth_N"/>
</dbReference>
<dbReference type="InterPro" id="IPR036965">
    <property type="entry name" value="Terpene_synth_N_sf"/>
</dbReference>
<dbReference type="InterPro" id="IPR050148">
    <property type="entry name" value="Terpene_synthase-like"/>
</dbReference>
<dbReference type="InterPro" id="IPR005630">
    <property type="entry name" value="Terpene_synthase_metal-bd"/>
</dbReference>
<dbReference type="InterPro" id="IPR008930">
    <property type="entry name" value="Terpenoid_cyclase/PrenylTrfase"/>
</dbReference>
<dbReference type="PANTHER" id="PTHR31739">
    <property type="entry name" value="ENT-COPALYL DIPHOSPHATE SYNTHASE, CHLOROPLASTIC"/>
    <property type="match status" value="1"/>
</dbReference>
<dbReference type="PANTHER" id="PTHR31739:SF3">
    <property type="entry name" value="ENT-KAUR-16-ENE SYNTHASE, CHLOROPLASTIC"/>
    <property type="match status" value="1"/>
</dbReference>
<dbReference type="Pfam" id="PF01397">
    <property type="entry name" value="Terpene_synth"/>
    <property type="match status" value="1"/>
</dbReference>
<dbReference type="Pfam" id="PF03936">
    <property type="entry name" value="Terpene_synth_C"/>
    <property type="match status" value="1"/>
</dbReference>
<dbReference type="SFLD" id="SFLDG01014">
    <property type="entry name" value="Terpene_Cyclase_Like_1_N-term"/>
    <property type="match status" value="1"/>
</dbReference>
<dbReference type="SUPFAM" id="SSF48239">
    <property type="entry name" value="Terpenoid cyclases/Protein prenyltransferases"/>
    <property type="match status" value="2"/>
</dbReference>
<dbReference type="SUPFAM" id="SSF48576">
    <property type="entry name" value="Terpenoid synthases"/>
    <property type="match status" value="1"/>
</dbReference>
<proteinExistence type="evidence at protein level"/>
<gene>
    <name evidence="4" type="primary">KS1</name>
</gene>
<sequence length="794" mass="90262">MSLLLSNSVLVGPKFRSSRISHASASLDIGLQRATSPQNASVPTCFEETKGRIAKLFHKNELSVSTYDTAWVAMVPSPTSSEEPCFPACLNWLLENQCHDGSWARPHHHHMLKKDVLSSTLACILALKKWGVGEEQINRGLHFVELNFASATEKGQITPMGFDIIFPAMLDNARGLSLNLQLEPTMLNDLIYKRDLELKRCNQSNSAEKEVYWAHIAEGMGKLHDWESVMKYQRKNGSLFNCPSTTAAAFTALRNSDCLNYLCLALEKFGSAVPAVYPLDIYSQLCTVGNLERLGISRYFLTEIQSVLDETYRSWLQGDEEIFMDASTCALAFRTLRMNGYNVTSDPITKILQECFSSSFRGNMTDNNTTLEIYRASELILYPEERDLVQHNLRLKTFLEQELSSNGFIQSCQLGRNINAEVNQAIEYPFYAIMDRMAKRKNIENYNIDNTRILKTSYRSPNFGNKDFLSLSVEDFNRCQVIHREELRELERWVIENRLDELKFARSKAAYCYFSAAATIFSPELSDARMSWAKNGVLTTVVDDFFDVGGSVEELKNLIQLVELWDVDVSTQCCSPNVQIIFSALKHTICEIADKGFKLQGRSITDHIISIWLDLLYSMMKETELGIDKSFPTMDEYMSNAYVSFALGPIVLPALYLVGPKLSEEMVNHSEYHTLFKLMSTCGRLLNDIRGYERELKDGKISAVSLYIMNNGGEITTEAAISEMRSWIERDRRELLRLVLEENKSVLPKACKKLFWHMCTVVHVFYSKDDGFTSLNLHGVVNAIINEPIVLNQF</sequence>
<reference key="1">
    <citation type="journal article" date="2019" name="Phytochemistry">
        <title>Diterpene synthases facilitating production of the kaurane skeleton of eriocalyxin B in the medicinal plant Isodon eriocalyx.</title>
        <authorList>
            <person name="Du G."/>
            <person name="Gong H.-Y."/>
            <person name="Feng K.-N."/>
            <person name="Chen Q.-Q."/>
            <person name="Yang Y.-L."/>
            <person name="Fu X.-L."/>
            <person name="Lu S."/>
            <person name="Zeng Y."/>
        </authorList>
    </citation>
    <scope>NUCLEOTIDE SEQUENCE [MRNA]</scope>
    <scope>FUNCTION</scope>
    <scope>CATALYTIC ACTIVITY</scope>
    <scope>PATHWAY</scope>
    <scope>TISSUE SPECIFICITY</scope>
    <scope>DEVELOPMENTAL STAGE</scope>
</reference>
<protein>
    <recommendedName>
        <fullName evidence="4">Ent-kaurene synthase 1, chloroplastic</fullName>
        <shortName evidence="4">IeKS1</shortName>
        <ecNumber evidence="3">4.2.3.19</ecNumber>
    </recommendedName>
</protein>